<proteinExistence type="evidence at protein level"/>
<organism>
    <name type="scientific">Sulfolobus acidocaldarius (strain ATCC 33909 / DSM 639 / JCM 8929 / NBRC 15157 / NCIMB 11770)</name>
    <dbReference type="NCBI Taxonomy" id="330779"/>
    <lineage>
        <taxon>Archaea</taxon>
        <taxon>Thermoproteota</taxon>
        <taxon>Thermoprotei</taxon>
        <taxon>Sulfolobales</taxon>
        <taxon>Sulfolobaceae</taxon>
        <taxon>Sulfolobus</taxon>
    </lineage>
</organism>
<keyword id="KW-0002">3D-structure</keyword>
<keyword id="KW-1185">Reference proteome</keyword>
<keyword id="KW-0687">Ribonucleoprotein</keyword>
<keyword id="KW-0689">Ribosomal protein</keyword>
<keyword id="KW-0694">RNA-binding</keyword>
<keyword id="KW-0699">rRNA-binding</keyword>
<reference key="1">
    <citation type="journal article" date="1999" name="Mol. Phylogenet. Evol.">
        <title>The structure and evolution of the ribosomal proteins encoded in the spc operon of the archaeon (Crenarchaeota) Sulfolobus acidocaldarius.</title>
        <authorList>
            <person name="Yang D."/>
            <person name="Kusser I."/>
            <person name="Koepke A.K."/>
            <person name="Koop B.F."/>
            <person name="Matheson A.T."/>
        </authorList>
    </citation>
    <scope>NUCLEOTIDE SEQUENCE [GENOMIC DNA]</scope>
    <source>
        <strain>ATCC 33909 / DSM 639 / JCM 8929 / NBRC 15157 / NCIMB 11770</strain>
    </source>
</reference>
<reference key="2">
    <citation type="journal article" date="2005" name="J. Bacteriol.">
        <title>The genome of Sulfolobus acidocaldarius, a model organism of the Crenarchaeota.</title>
        <authorList>
            <person name="Chen L."/>
            <person name="Bruegger K."/>
            <person name="Skovgaard M."/>
            <person name="Redder P."/>
            <person name="She Q."/>
            <person name="Torarinsson E."/>
            <person name="Greve B."/>
            <person name="Awayez M."/>
            <person name="Zibat A."/>
            <person name="Klenk H.-P."/>
            <person name="Garrett R.A."/>
        </authorList>
    </citation>
    <scope>NUCLEOTIDE SEQUENCE [LARGE SCALE GENOMIC DNA]</scope>
    <source>
        <strain>ATCC 33909 / DSM 639 / JCM 8929 / NBRC 15157 / NCIMB 11770</strain>
    </source>
</reference>
<dbReference type="EMBL" id="Y07778">
    <property type="protein sequence ID" value="CAA69099.1"/>
    <property type="molecule type" value="Genomic_DNA"/>
</dbReference>
<dbReference type="EMBL" id="CP000077">
    <property type="protein sequence ID" value="AAY79967.1"/>
    <property type="molecule type" value="Genomic_DNA"/>
</dbReference>
<dbReference type="RefSeq" id="WP_011277469.1">
    <property type="nucleotide sequence ID" value="NC_007181.1"/>
</dbReference>
<dbReference type="PDB" id="8HKU">
    <property type="method" value="EM"/>
    <property type="resolution" value="2.72 A"/>
    <property type="chains" value="L15P=1-144"/>
</dbReference>
<dbReference type="PDB" id="8HKV">
    <property type="method" value="EM"/>
    <property type="resolution" value="4.94 A"/>
    <property type="chains" value="L15P=1-144"/>
</dbReference>
<dbReference type="PDB" id="8HKY">
    <property type="method" value="EM"/>
    <property type="resolution" value="4.45 A"/>
    <property type="chains" value="L15P=1-144"/>
</dbReference>
<dbReference type="PDB" id="8HKZ">
    <property type="method" value="EM"/>
    <property type="resolution" value="4.78 A"/>
    <property type="chains" value="L15P=1-144"/>
</dbReference>
<dbReference type="PDB" id="8HL1">
    <property type="method" value="EM"/>
    <property type="resolution" value="3.93 A"/>
    <property type="chains" value="L15P=1-144"/>
</dbReference>
<dbReference type="PDB" id="8HL2">
    <property type="method" value="EM"/>
    <property type="resolution" value="4.10 A"/>
    <property type="chains" value="L15P=1-144"/>
</dbReference>
<dbReference type="PDB" id="8HL3">
    <property type="method" value="EM"/>
    <property type="resolution" value="4.80 A"/>
    <property type="chains" value="L15P=1-144"/>
</dbReference>
<dbReference type="PDB" id="8HL4">
    <property type="method" value="EM"/>
    <property type="resolution" value="4.62 A"/>
    <property type="chains" value="L15P=1-144"/>
</dbReference>
<dbReference type="PDB" id="8HL5">
    <property type="method" value="EM"/>
    <property type="resolution" value="5.72 A"/>
    <property type="chains" value="L15P=1-144"/>
</dbReference>
<dbReference type="PDBsum" id="8HKU"/>
<dbReference type="PDBsum" id="8HKV"/>
<dbReference type="PDBsum" id="8HKY"/>
<dbReference type="PDBsum" id="8HKZ"/>
<dbReference type="PDBsum" id="8HL1"/>
<dbReference type="PDBsum" id="8HL2"/>
<dbReference type="PDBsum" id="8HL3"/>
<dbReference type="PDBsum" id="8HL4"/>
<dbReference type="PDBsum" id="8HL5"/>
<dbReference type="EMDB" id="EMD-34860"/>
<dbReference type="EMDB" id="EMD-34861"/>
<dbReference type="EMDB" id="EMD-34863"/>
<dbReference type="EMDB" id="EMD-34864"/>
<dbReference type="EMDB" id="EMD-34866"/>
<dbReference type="EMDB" id="EMD-34867"/>
<dbReference type="EMDB" id="EMD-34868"/>
<dbReference type="EMDB" id="EMD-34869"/>
<dbReference type="EMDB" id="EMD-34870"/>
<dbReference type="SMR" id="O05643"/>
<dbReference type="STRING" id="330779.Saci_0575"/>
<dbReference type="GeneID" id="14551096"/>
<dbReference type="KEGG" id="sai:Saci_0575"/>
<dbReference type="PATRIC" id="fig|330779.12.peg.554"/>
<dbReference type="eggNOG" id="arCOG00779">
    <property type="taxonomic scope" value="Archaea"/>
</dbReference>
<dbReference type="HOGENOM" id="CLU_109163_0_0_2"/>
<dbReference type="Proteomes" id="UP000001018">
    <property type="component" value="Chromosome"/>
</dbReference>
<dbReference type="GO" id="GO:0022625">
    <property type="term" value="C:cytosolic large ribosomal subunit"/>
    <property type="evidence" value="ECO:0007669"/>
    <property type="project" value="TreeGrafter"/>
</dbReference>
<dbReference type="GO" id="GO:0019843">
    <property type="term" value="F:rRNA binding"/>
    <property type="evidence" value="ECO:0007669"/>
    <property type="project" value="UniProtKB-UniRule"/>
</dbReference>
<dbReference type="GO" id="GO:0003735">
    <property type="term" value="F:structural constituent of ribosome"/>
    <property type="evidence" value="ECO:0007669"/>
    <property type="project" value="InterPro"/>
</dbReference>
<dbReference type="GO" id="GO:0006412">
    <property type="term" value="P:translation"/>
    <property type="evidence" value="ECO:0007669"/>
    <property type="project" value="UniProtKB-UniRule"/>
</dbReference>
<dbReference type="Gene3D" id="3.100.10.10">
    <property type="match status" value="1"/>
</dbReference>
<dbReference type="Gene3D" id="4.10.990.10">
    <property type="match status" value="1"/>
</dbReference>
<dbReference type="HAMAP" id="MF_01341">
    <property type="entry name" value="Ribosomal_uL15"/>
    <property type="match status" value="1"/>
</dbReference>
<dbReference type="InterPro" id="IPR027386">
    <property type="entry name" value="Rbsml_uL15_N"/>
</dbReference>
<dbReference type="InterPro" id="IPR030878">
    <property type="entry name" value="Ribosomal_uL15"/>
</dbReference>
<dbReference type="InterPro" id="IPR021131">
    <property type="entry name" value="Ribosomal_uL15/eL18"/>
</dbReference>
<dbReference type="InterPro" id="IPR036227">
    <property type="entry name" value="Ribosomal_uL15/eL18_sf"/>
</dbReference>
<dbReference type="InterPro" id="IPR001196">
    <property type="entry name" value="Ribosomal_uL15_CS"/>
</dbReference>
<dbReference type="PANTHER" id="PTHR11721">
    <property type="entry name" value="60S RIBOSOMAL PROTEIN L27A"/>
    <property type="match status" value="1"/>
</dbReference>
<dbReference type="PANTHER" id="PTHR11721:SF3">
    <property type="entry name" value="LARGE RIBOSOMAL SUBUNIT PROTEIN UL15"/>
    <property type="match status" value="1"/>
</dbReference>
<dbReference type="Pfam" id="PF00828">
    <property type="entry name" value="Ribosomal_L27A"/>
    <property type="match status" value="1"/>
</dbReference>
<dbReference type="SUPFAM" id="SSF52080">
    <property type="entry name" value="Ribosomal proteins L15p and L18e"/>
    <property type="match status" value="1"/>
</dbReference>
<dbReference type="PROSITE" id="PS00475">
    <property type="entry name" value="RIBOSOMAL_L15"/>
    <property type="match status" value="1"/>
</dbReference>
<feature type="chain" id="PRO_0000104874" description="Large ribosomal subunit protein uL15">
    <location>
        <begin position="1"/>
        <end position="144"/>
    </location>
</feature>
<feature type="region of interest" description="Disordered" evidence="2">
    <location>
        <begin position="1"/>
        <end position="35"/>
    </location>
</feature>
<feature type="compositionally biased region" description="Basic residues" evidence="2">
    <location>
        <begin position="1"/>
        <end position="16"/>
    </location>
</feature>
<gene>
    <name evidence="1" type="primary">rpl15</name>
    <name type="ordered locus">Saci_0575</name>
</gene>
<protein>
    <recommendedName>
        <fullName evidence="1">Large ribosomal subunit protein uL15</fullName>
    </recommendedName>
    <alternativeName>
        <fullName evidence="3">50S ribosomal protein L15</fullName>
    </alternativeName>
</protein>
<evidence type="ECO:0000255" key="1">
    <source>
        <dbReference type="HAMAP-Rule" id="MF_01341"/>
    </source>
</evidence>
<evidence type="ECO:0000256" key="2">
    <source>
        <dbReference type="SAM" id="MobiDB-lite"/>
    </source>
</evidence>
<evidence type="ECO:0000305" key="3"/>
<accession>O05643</accession>
<accession>Q4JB62</accession>
<name>RL15_SULAC</name>
<comment type="function">
    <text evidence="1">Binds to the 23S rRNA.</text>
</comment>
<comment type="subunit">
    <text evidence="1">Part of the 50S ribosomal subunit.</text>
</comment>
<comment type="similarity">
    <text evidence="1">Belongs to the universal ribosomal protein uL15 family.</text>
</comment>
<sequence length="144" mass="16439">MVVRKEKKSRKYRGYRTHGWGTKGQHRDRGAQGGRQIGMHKEKWSWTVKFGEGWYGKHGFRNPTSKLVNAIGLRKLQEYIDNDKIKIEEENGKKVVDLAKYGYDKLLGGGNLRLPLVIKVAKATEKAKERVKEIGGEIILTSSE</sequence>